<gene>
    <name evidence="1" type="primary">rpmI</name>
    <name type="ordered locus">ROP_06930</name>
</gene>
<reference key="1">
    <citation type="submission" date="2009-03" db="EMBL/GenBank/DDBJ databases">
        <title>Comparison of the complete genome sequences of Rhodococcus erythropolis PR4 and Rhodococcus opacus B4.</title>
        <authorList>
            <person name="Takarada H."/>
            <person name="Sekine M."/>
            <person name="Hosoyama A."/>
            <person name="Yamada R."/>
            <person name="Fujisawa T."/>
            <person name="Omata S."/>
            <person name="Shimizu A."/>
            <person name="Tsukatani N."/>
            <person name="Tanikawa S."/>
            <person name="Fujita N."/>
            <person name="Harayama S."/>
        </authorList>
    </citation>
    <scope>NUCLEOTIDE SEQUENCE [LARGE SCALE GENOMIC DNA]</scope>
    <source>
        <strain>B4</strain>
    </source>
</reference>
<protein>
    <recommendedName>
        <fullName evidence="1">Large ribosomal subunit protein bL35</fullName>
    </recommendedName>
    <alternativeName>
        <fullName evidence="3">50S ribosomal protein L35</fullName>
    </alternativeName>
</protein>
<proteinExistence type="inferred from homology"/>
<organism>
    <name type="scientific">Rhodococcus opacus (strain B4)</name>
    <dbReference type="NCBI Taxonomy" id="632772"/>
    <lineage>
        <taxon>Bacteria</taxon>
        <taxon>Bacillati</taxon>
        <taxon>Actinomycetota</taxon>
        <taxon>Actinomycetes</taxon>
        <taxon>Mycobacteriales</taxon>
        <taxon>Nocardiaceae</taxon>
        <taxon>Rhodococcus</taxon>
    </lineage>
</organism>
<dbReference type="EMBL" id="AP011115">
    <property type="protein sequence ID" value="BAH48940.1"/>
    <property type="molecule type" value="Genomic_DNA"/>
</dbReference>
<dbReference type="RefSeq" id="WP_005247390.1">
    <property type="nucleotide sequence ID" value="NC_012522.1"/>
</dbReference>
<dbReference type="SMR" id="C1AT08"/>
<dbReference type="STRING" id="632772.ROP_06930"/>
<dbReference type="GeneID" id="69892620"/>
<dbReference type="KEGG" id="rop:ROP_06930"/>
<dbReference type="PATRIC" id="fig|632772.20.peg.754"/>
<dbReference type="HOGENOM" id="CLU_169643_4_2_11"/>
<dbReference type="OrthoDB" id="9804851at2"/>
<dbReference type="Proteomes" id="UP000002212">
    <property type="component" value="Chromosome"/>
</dbReference>
<dbReference type="GO" id="GO:0022625">
    <property type="term" value="C:cytosolic large ribosomal subunit"/>
    <property type="evidence" value="ECO:0007669"/>
    <property type="project" value="TreeGrafter"/>
</dbReference>
<dbReference type="GO" id="GO:0003735">
    <property type="term" value="F:structural constituent of ribosome"/>
    <property type="evidence" value="ECO:0007669"/>
    <property type="project" value="InterPro"/>
</dbReference>
<dbReference type="GO" id="GO:0006412">
    <property type="term" value="P:translation"/>
    <property type="evidence" value="ECO:0007669"/>
    <property type="project" value="UniProtKB-UniRule"/>
</dbReference>
<dbReference type="FunFam" id="4.10.410.60:FF:000001">
    <property type="entry name" value="50S ribosomal protein L35"/>
    <property type="match status" value="1"/>
</dbReference>
<dbReference type="Gene3D" id="4.10.410.60">
    <property type="match status" value="1"/>
</dbReference>
<dbReference type="HAMAP" id="MF_00514">
    <property type="entry name" value="Ribosomal_bL35"/>
    <property type="match status" value="1"/>
</dbReference>
<dbReference type="InterPro" id="IPR001706">
    <property type="entry name" value="Ribosomal_bL35"/>
</dbReference>
<dbReference type="InterPro" id="IPR021137">
    <property type="entry name" value="Ribosomal_bL35-like"/>
</dbReference>
<dbReference type="InterPro" id="IPR037229">
    <property type="entry name" value="Ribosomal_bL35_sf"/>
</dbReference>
<dbReference type="NCBIfam" id="TIGR00001">
    <property type="entry name" value="rpmI_bact"/>
    <property type="match status" value="1"/>
</dbReference>
<dbReference type="PANTHER" id="PTHR33343">
    <property type="entry name" value="54S RIBOSOMAL PROTEIN BL35M"/>
    <property type="match status" value="1"/>
</dbReference>
<dbReference type="PANTHER" id="PTHR33343:SF1">
    <property type="entry name" value="LARGE RIBOSOMAL SUBUNIT PROTEIN BL35M"/>
    <property type="match status" value="1"/>
</dbReference>
<dbReference type="Pfam" id="PF01632">
    <property type="entry name" value="Ribosomal_L35p"/>
    <property type="match status" value="1"/>
</dbReference>
<dbReference type="PRINTS" id="PR00064">
    <property type="entry name" value="RIBOSOMALL35"/>
</dbReference>
<dbReference type="SUPFAM" id="SSF143034">
    <property type="entry name" value="L35p-like"/>
    <property type="match status" value="1"/>
</dbReference>
<name>RL35_RHOOB</name>
<accession>C1AT08</accession>
<feature type="chain" id="PRO_1000146156" description="Large ribosomal subunit protein bL35">
    <location>
        <begin position="1"/>
        <end position="64"/>
    </location>
</feature>
<feature type="region of interest" description="Disordered" evidence="2">
    <location>
        <begin position="1"/>
        <end position="23"/>
    </location>
</feature>
<feature type="compositionally biased region" description="Basic residues" evidence="2">
    <location>
        <begin position="1"/>
        <end position="15"/>
    </location>
</feature>
<keyword id="KW-0687">Ribonucleoprotein</keyword>
<keyword id="KW-0689">Ribosomal protein</keyword>
<comment type="similarity">
    <text evidence="1">Belongs to the bacterial ribosomal protein bL35 family.</text>
</comment>
<sequence length="64" mass="7131">MPKSKTHSGTAKRFKVSGSGKILRQKAGRRHLLEHKATKVTRRLDGVAVVSKADTPRIKRLLDI</sequence>
<evidence type="ECO:0000255" key="1">
    <source>
        <dbReference type="HAMAP-Rule" id="MF_00514"/>
    </source>
</evidence>
<evidence type="ECO:0000256" key="2">
    <source>
        <dbReference type="SAM" id="MobiDB-lite"/>
    </source>
</evidence>
<evidence type="ECO:0000305" key="3"/>